<keyword id="KW-0131">Cell cycle</keyword>
<keyword id="KW-0132">Cell division</keyword>
<keyword id="KW-0997">Cell inner membrane</keyword>
<keyword id="KW-1003">Cell membrane</keyword>
<keyword id="KW-0133">Cell shape</keyword>
<keyword id="KW-0961">Cell wall biogenesis/degradation</keyword>
<keyword id="KW-0460">Magnesium</keyword>
<keyword id="KW-0472">Membrane</keyword>
<keyword id="KW-0479">Metal-binding</keyword>
<keyword id="KW-0573">Peptidoglycan synthesis</keyword>
<keyword id="KW-1185">Reference proteome</keyword>
<keyword id="KW-0808">Transferase</keyword>
<keyword id="KW-0812">Transmembrane</keyword>
<keyword id="KW-1133">Transmembrane helix</keyword>
<name>MRAY_SHEON</name>
<reference key="1">
    <citation type="journal article" date="2002" name="Nat. Biotechnol.">
        <title>Genome sequence of the dissimilatory metal ion-reducing bacterium Shewanella oneidensis.</title>
        <authorList>
            <person name="Heidelberg J.F."/>
            <person name="Paulsen I.T."/>
            <person name="Nelson K.E."/>
            <person name="Gaidos E.J."/>
            <person name="Nelson W.C."/>
            <person name="Read T.D."/>
            <person name="Eisen J.A."/>
            <person name="Seshadri R."/>
            <person name="Ward N.L."/>
            <person name="Methe B.A."/>
            <person name="Clayton R.A."/>
            <person name="Meyer T."/>
            <person name="Tsapin A."/>
            <person name="Scott J."/>
            <person name="Beanan M.J."/>
            <person name="Brinkac L.M."/>
            <person name="Daugherty S.C."/>
            <person name="DeBoy R.T."/>
            <person name="Dodson R.J."/>
            <person name="Durkin A.S."/>
            <person name="Haft D.H."/>
            <person name="Kolonay J.F."/>
            <person name="Madupu R."/>
            <person name="Peterson J.D."/>
            <person name="Umayam L.A."/>
            <person name="White O."/>
            <person name="Wolf A.M."/>
            <person name="Vamathevan J.J."/>
            <person name="Weidman J.F."/>
            <person name="Impraim M."/>
            <person name="Lee K."/>
            <person name="Berry K.J."/>
            <person name="Lee C."/>
            <person name="Mueller J."/>
            <person name="Khouri H.M."/>
            <person name="Gill J."/>
            <person name="Utterback T.R."/>
            <person name="McDonald L.A."/>
            <person name="Feldblyum T.V."/>
            <person name="Smith H.O."/>
            <person name="Venter J.C."/>
            <person name="Nealson K.H."/>
            <person name="Fraser C.M."/>
        </authorList>
    </citation>
    <scope>NUCLEOTIDE SEQUENCE [LARGE SCALE GENOMIC DNA]</scope>
    <source>
        <strain>ATCC 700550 / JCM 31522 / CIP 106686 / LMG 19005 / NCIMB 14063 / MR-1</strain>
    </source>
</reference>
<proteinExistence type="inferred from homology"/>
<sequence>MLVYLAEYLTRFHTGFNVFSYVTFRAILGLLTALMFSLWWGPKLIERLQLMQIGQVVRNDGPESHFSKRGTPTMGGLLILGAIFLSVLLWGDLGSRYVWVMLFVLGSFGMIGFIDDYRKVVRKDTKGLIARWKYILQSLAALIIAFFLYTTAANPGETQLVVPFFKDVMPQLGAVFIVLAYFTIVGSSNAVNLTDGLDGLAIMPTVMVAAAFALIAYLSGHAQFANYLHIPHLPGSGELVIVCTAIVGAGLGFLWFNTYPAQVFMGDVGSLSLGAALGAIAVLVRQEILLVIMGGVFVMETVSVILQVGSYKLRGQRIFRMAPIHHHYELKGWPEPRVIVRFWIISIFLVLLGLATLKLR</sequence>
<protein>
    <recommendedName>
        <fullName evidence="1">Phospho-N-acetylmuramoyl-pentapeptide-transferase</fullName>
        <ecNumber evidence="1">2.7.8.13</ecNumber>
    </recommendedName>
    <alternativeName>
        <fullName evidence="1">UDP-MurNAc-pentapeptide phosphotransferase</fullName>
    </alternativeName>
</protein>
<accession>Q8E9P5</accession>
<organism>
    <name type="scientific">Shewanella oneidensis (strain ATCC 700550 / JCM 31522 / CIP 106686 / LMG 19005 / NCIMB 14063 / MR-1)</name>
    <dbReference type="NCBI Taxonomy" id="211586"/>
    <lineage>
        <taxon>Bacteria</taxon>
        <taxon>Pseudomonadati</taxon>
        <taxon>Pseudomonadota</taxon>
        <taxon>Gammaproteobacteria</taxon>
        <taxon>Alteromonadales</taxon>
        <taxon>Shewanellaceae</taxon>
        <taxon>Shewanella</taxon>
    </lineage>
</organism>
<dbReference type="EC" id="2.7.8.13" evidence="1"/>
<dbReference type="EMBL" id="AE014299">
    <property type="protein sequence ID" value="AAN57194.1"/>
    <property type="molecule type" value="Genomic_DNA"/>
</dbReference>
<dbReference type="RefSeq" id="NP_719750.1">
    <property type="nucleotide sequence ID" value="NC_004347.2"/>
</dbReference>
<dbReference type="RefSeq" id="WP_011073903.1">
    <property type="nucleotide sequence ID" value="NC_004347.2"/>
</dbReference>
<dbReference type="SMR" id="Q8E9P5"/>
<dbReference type="STRING" id="211586.SO_4222"/>
<dbReference type="PaxDb" id="211586-SO_4222"/>
<dbReference type="KEGG" id="son:SO_4222"/>
<dbReference type="PATRIC" id="fig|211586.12.peg.4080"/>
<dbReference type="eggNOG" id="COG0472">
    <property type="taxonomic scope" value="Bacteria"/>
</dbReference>
<dbReference type="HOGENOM" id="CLU_023982_0_0_6"/>
<dbReference type="OrthoDB" id="9805475at2"/>
<dbReference type="PhylomeDB" id="Q8E9P5"/>
<dbReference type="BioCyc" id="SONE211586:G1GMP-3899-MONOMER"/>
<dbReference type="UniPathway" id="UPA00219"/>
<dbReference type="Proteomes" id="UP000008186">
    <property type="component" value="Chromosome"/>
</dbReference>
<dbReference type="GO" id="GO:0005886">
    <property type="term" value="C:plasma membrane"/>
    <property type="evidence" value="ECO:0000318"/>
    <property type="project" value="GO_Central"/>
</dbReference>
<dbReference type="GO" id="GO:0046872">
    <property type="term" value="F:metal ion binding"/>
    <property type="evidence" value="ECO:0007669"/>
    <property type="project" value="UniProtKB-KW"/>
</dbReference>
<dbReference type="GO" id="GO:0008963">
    <property type="term" value="F:phospho-N-acetylmuramoyl-pentapeptide-transferase activity"/>
    <property type="evidence" value="ECO:0000318"/>
    <property type="project" value="GO_Central"/>
</dbReference>
<dbReference type="GO" id="GO:0051992">
    <property type="term" value="F:UDP-N-acetylmuramoyl-L-alanyl-D-glutamyl-meso-2,6-diaminopimelyl-D-alanyl-D-alanine:undecaprenyl-phosphate transferase activity"/>
    <property type="evidence" value="ECO:0007669"/>
    <property type="project" value="RHEA"/>
</dbReference>
<dbReference type="GO" id="GO:0051301">
    <property type="term" value="P:cell division"/>
    <property type="evidence" value="ECO:0007669"/>
    <property type="project" value="UniProtKB-KW"/>
</dbReference>
<dbReference type="GO" id="GO:0044038">
    <property type="term" value="P:cell wall macromolecule biosynthetic process"/>
    <property type="evidence" value="ECO:0000318"/>
    <property type="project" value="GO_Central"/>
</dbReference>
<dbReference type="GO" id="GO:0071555">
    <property type="term" value="P:cell wall organization"/>
    <property type="evidence" value="ECO:0000318"/>
    <property type="project" value="GO_Central"/>
</dbReference>
<dbReference type="GO" id="GO:0009252">
    <property type="term" value="P:peptidoglycan biosynthetic process"/>
    <property type="evidence" value="ECO:0007669"/>
    <property type="project" value="UniProtKB-UniRule"/>
</dbReference>
<dbReference type="GO" id="GO:0008360">
    <property type="term" value="P:regulation of cell shape"/>
    <property type="evidence" value="ECO:0007669"/>
    <property type="project" value="UniProtKB-KW"/>
</dbReference>
<dbReference type="CDD" id="cd06852">
    <property type="entry name" value="GT_MraY"/>
    <property type="match status" value="1"/>
</dbReference>
<dbReference type="HAMAP" id="MF_00038">
    <property type="entry name" value="MraY"/>
    <property type="match status" value="1"/>
</dbReference>
<dbReference type="InterPro" id="IPR000715">
    <property type="entry name" value="Glycosyl_transferase_4"/>
</dbReference>
<dbReference type="InterPro" id="IPR003524">
    <property type="entry name" value="PNAcMuramoyl-5peptid_Trfase"/>
</dbReference>
<dbReference type="InterPro" id="IPR018480">
    <property type="entry name" value="PNAcMuramoyl-5peptid_Trfase_CS"/>
</dbReference>
<dbReference type="NCBIfam" id="TIGR00445">
    <property type="entry name" value="mraY"/>
    <property type="match status" value="1"/>
</dbReference>
<dbReference type="PANTHER" id="PTHR22926">
    <property type="entry name" value="PHOSPHO-N-ACETYLMURAMOYL-PENTAPEPTIDE-TRANSFERASE"/>
    <property type="match status" value="1"/>
</dbReference>
<dbReference type="PANTHER" id="PTHR22926:SF5">
    <property type="entry name" value="PHOSPHO-N-ACETYLMURAMOYL-PENTAPEPTIDE-TRANSFERASE HOMOLOG"/>
    <property type="match status" value="1"/>
</dbReference>
<dbReference type="Pfam" id="PF00953">
    <property type="entry name" value="Glycos_transf_4"/>
    <property type="match status" value="1"/>
</dbReference>
<dbReference type="Pfam" id="PF10555">
    <property type="entry name" value="MraY_sig1"/>
    <property type="match status" value="1"/>
</dbReference>
<dbReference type="PROSITE" id="PS01347">
    <property type="entry name" value="MRAY_1"/>
    <property type="match status" value="1"/>
</dbReference>
<dbReference type="PROSITE" id="PS01348">
    <property type="entry name" value="MRAY_2"/>
    <property type="match status" value="1"/>
</dbReference>
<evidence type="ECO:0000255" key="1">
    <source>
        <dbReference type="HAMAP-Rule" id="MF_00038"/>
    </source>
</evidence>
<gene>
    <name evidence="1" type="primary">mraY</name>
    <name type="ordered locus">SO_4222</name>
</gene>
<feature type="chain" id="PRO_0000108886" description="Phospho-N-acetylmuramoyl-pentapeptide-transferase">
    <location>
        <begin position="1"/>
        <end position="360"/>
    </location>
</feature>
<feature type="transmembrane region" description="Helical" evidence="1">
    <location>
        <begin position="26"/>
        <end position="46"/>
    </location>
</feature>
<feature type="transmembrane region" description="Helical" evidence="1">
    <location>
        <begin position="74"/>
        <end position="94"/>
    </location>
</feature>
<feature type="transmembrane region" description="Helical" evidence="1">
    <location>
        <begin position="97"/>
        <end position="117"/>
    </location>
</feature>
<feature type="transmembrane region" description="Helical" evidence="1">
    <location>
        <begin position="134"/>
        <end position="154"/>
    </location>
</feature>
<feature type="transmembrane region" description="Helical" evidence="1">
    <location>
        <begin position="168"/>
        <end position="188"/>
    </location>
</feature>
<feature type="transmembrane region" description="Helical" evidence="1">
    <location>
        <begin position="199"/>
        <end position="219"/>
    </location>
</feature>
<feature type="transmembrane region" description="Helical" evidence="1">
    <location>
        <begin position="236"/>
        <end position="256"/>
    </location>
</feature>
<feature type="transmembrane region" description="Helical" evidence="1">
    <location>
        <begin position="263"/>
        <end position="283"/>
    </location>
</feature>
<feature type="transmembrane region" description="Helical" evidence="1">
    <location>
        <begin position="288"/>
        <end position="308"/>
    </location>
</feature>
<feature type="transmembrane region" description="Helical" evidence="1">
    <location>
        <begin position="338"/>
        <end position="358"/>
    </location>
</feature>
<comment type="function">
    <text evidence="1">Catalyzes the initial step of the lipid cycle reactions in the biosynthesis of the cell wall peptidoglycan: transfers peptidoglycan precursor phospho-MurNAc-pentapeptide from UDP-MurNAc-pentapeptide onto the lipid carrier undecaprenyl phosphate, yielding undecaprenyl-pyrophosphoryl-MurNAc-pentapeptide, known as lipid I.</text>
</comment>
<comment type="catalytic activity">
    <reaction evidence="1">
        <text>UDP-N-acetyl-alpha-D-muramoyl-L-alanyl-gamma-D-glutamyl-meso-2,6-diaminopimeloyl-D-alanyl-D-alanine + di-trans,octa-cis-undecaprenyl phosphate = di-trans,octa-cis-undecaprenyl diphospho-N-acetyl-alpha-D-muramoyl-L-alanyl-D-glutamyl-meso-2,6-diaminopimeloyl-D-alanyl-D-alanine + UMP</text>
        <dbReference type="Rhea" id="RHEA:28386"/>
        <dbReference type="ChEBI" id="CHEBI:57865"/>
        <dbReference type="ChEBI" id="CHEBI:60392"/>
        <dbReference type="ChEBI" id="CHEBI:61386"/>
        <dbReference type="ChEBI" id="CHEBI:61387"/>
        <dbReference type="EC" id="2.7.8.13"/>
    </reaction>
</comment>
<comment type="cofactor">
    <cofactor evidence="1">
        <name>Mg(2+)</name>
        <dbReference type="ChEBI" id="CHEBI:18420"/>
    </cofactor>
</comment>
<comment type="pathway">
    <text evidence="1">Cell wall biogenesis; peptidoglycan biosynthesis.</text>
</comment>
<comment type="subcellular location">
    <subcellularLocation>
        <location evidence="1">Cell inner membrane</location>
        <topology evidence="1">Multi-pass membrane protein</topology>
    </subcellularLocation>
</comment>
<comment type="similarity">
    <text evidence="1">Belongs to the glycosyltransferase 4 family. MraY subfamily.</text>
</comment>